<gene>
    <name evidence="11" type="primary">HSDL2</name>
    <name type="synonym">C9orf99</name>
    <name type="synonym">SDR13C1</name>
</gene>
<organism>
    <name type="scientific">Homo sapiens</name>
    <name type="common">Human</name>
    <dbReference type="NCBI Taxonomy" id="9606"/>
    <lineage>
        <taxon>Eukaryota</taxon>
        <taxon>Metazoa</taxon>
        <taxon>Chordata</taxon>
        <taxon>Craniata</taxon>
        <taxon>Vertebrata</taxon>
        <taxon>Euteleostomi</taxon>
        <taxon>Mammalia</taxon>
        <taxon>Eutheria</taxon>
        <taxon>Euarchontoglires</taxon>
        <taxon>Primates</taxon>
        <taxon>Haplorrhini</taxon>
        <taxon>Catarrhini</taxon>
        <taxon>Hominidae</taxon>
        <taxon>Homo</taxon>
    </lineage>
</organism>
<reference key="1">
    <citation type="journal article" date="2003" name="Biochem. Genet.">
        <title>Molecular cloning and characterization of a novel human hydroxysteroid dehydrogenase-like 2 (HSDL2) cDNA from fetal brain.</title>
        <authorList>
            <person name="Dai J."/>
            <person name="Xie Y."/>
            <person name="Wu Q."/>
            <person name="Wang L."/>
            <person name="Yin G."/>
            <person name="Ye X."/>
            <person name="Zeng L."/>
            <person name="Xu J."/>
            <person name="Ji C."/>
            <person name="Gu S."/>
            <person name="Huang Q."/>
            <person name="Zhao R.C."/>
            <person name="Mao Y."/>
        </authorList>
    </citation>
    <scope>NUCLEOTIDE SEQUENCE [MRNA] (ISOFORM 1)</scope>
    <scope>TISSUE SPECIFICITY</scope>
    <source>
        <tissue>Fetal brain</tissue>
    </source>
</reference>
<reference key="2">
    <citation type="journal article" date="2004" name="Nat. Genet.">
        <title>Complete sequencing and characterization of 21,243 full-length human cDNAs.</title>
        <authorList>
            <person name="Ota T."/>
            <person name="Suzuki Y."/>
            <person name="Nishikawa T."/>
            <person name="Otsuki T."/>
            <person name="Sugiyama T."/>
            <person name="Irie R."/>
            <person name="Wakamatsu A."/>
            <person name="Hayashi K."/>
            <person name="Sato H."/>
            <person name="Nagai K."/>
            <person name="Kimura K."/>
            <person name="Makita H."/>
            <person name="Sekine M."/>
            <person name="Obayashi M."/>
            <person name="Nishi T."/>
            <person name="Shibahara T."/>
            <person name="Tanaka T."/>
            <person name="Ishii S."/>
            <person name="Yamamoto J."/>
            <person name="Saito K."/>
            <person name="Kawai Y."/>
            <person name="Isono Y."/>
            <person name="Nakamura Y."/>
            <person name="Nagahari K."/>
            <person name="Murakami K."/>
            <person name="Yasuda T."/>
            <person name="Iwayanagi T."/>
            <person name="Wagatsuma M."/>
            <person name="Shiratori A."/>
            <person name="Sudo H."/>
            <person name="Hosoiri T."/>
            <person name="Kaku Y."/>
            <person name="Kodaira H."/>
            <person name="Kondo H."/>
            <person name="Sugawara M."/>
            <person name="Takahashi M."/>
            <person name="Kanda K."/>
            <person name="Yokoi T."/>
            <person name="Furuya T."/>
            <person name="Kikkawa E."/>
            <person name="Omura Y."/>
            <person name="Abe K."/>
            <person name="Kamihara K."/>
            <person name="Katsuta N."/>
            <person name="Sato K."/>
            <person name="Tanikawa M."/>
            <person name="Yamazaki M."/>
            <person name="Ninomiya K."/>
            <person name="Ishibashi T."/>
            <person name="Yamashita H."/>
            <person name="Murakawa K."/>
            <person name="Fujimori K."/>
            <person name="Tanai H."/>
            <person name="Kimata M."/>
            <person name="Watanabe M."/>
            <person name="Hiraoka S."/>
            <person name="Chiba Y."/>
            <person name="Ishida S."/>
            <person name="Ono Y."/>
            <person name="Takiguchi S."/>
            <person name="Watanabe S."/>
            <person name="Yosida M."/>
            <person name="Hotuta T."/>
            <person name="Kusano J."/>
            <person name="Kanehori K."/>
            <person name="Takahashi-Fujii A."/>
            <person name="Hara H."/>
            <person name="Tanase T.-O."/>
            <person name="Nomura Y."/>
            <person name="Togiya S."/>
            <person name="Komai F."/>
            <person name="Hara R."/>
            <person name="Takeuchi K."/>
            <person name="Arita M."/>
            <person name="Imose N."/>
            <person name="Musashino K."/>
            <person name="Yuuki H."/>
            <person name="Oshima A."/>
            <person name="Sasaki N."/>
            <person name="Aotsuka S."/>
            <person name="Yoshikawa Y."/>
            <person name="Matsunawa H."/>
            <person name="Ichihara T."/>
            <person name="Shiohata N."/>
            <person name="Sano S."/>
            <person name="Moriya S."/>
            <person name="Momiyama H."/>
            <person name="Satoh N."/>
            <person name="Takami S."/>
            <person name="Terashima Y."/>
            <person name="Suzuki O."/>
            <person name="Nakagawa S."/>
            <person name="Senoh A."/>
            <person name="Mizoguchi H."/>
            <person name="Goto Y."/>
            <person name="Shimizu F."/>
            <person name="Wakebe H."/>
            <person name="Hishigaki H."/>
            <person name="Watanabe T."/>
            <person name="Sugiyama A."/>
            <person name="Takemoto M."/>
            <person name="Kawakami B."/>
            <person name="Yamazaki M."/>
            <person name="Watanabe K."/>
            <person name="Kumagai A."/>
            <person name="Itakura S."/>
            <person name="Fukuzumi Y."/>
            <person name="Fujimori Y."/>
            <person name="Komiyama M."/>
            <person name="Tashiro H."/>
            <person name="Tanigami A."/>
            <person name="Fujiwara T."/>
            <person name="Ono T."/>
            <person name="Yamada K."/>
            <person name="Fujii Y."/>
            <person name="Ozaki K."/>
            <person name="Hirao M."/>
            <person name="Ohmori Y."/>
            <person name="Kawabata A."/>
            <person name="Hikiji T."/>
            <person name="Kobatake N."/>
            <person name="Inagaki H."/>
            <person name="Ikema Y."/>
            <person name="Okamoto S."/>
            <person name="Okitani R."/>
            <person name="Kawakami T."/>
            <person name="Noguchi S."/>
            <person name="Itoh T."/>
            <person name="Shigeta K."/>
            <person name="Senba T."/>
            <person name="Matsumura K."/>
            <person name="Nakajima Y."/>
            <person name="Mizuno T."/>
            <person name="Morinaga M."/>
            <person name="Sasaki M."/>
            <person name="Togashi T."/>
            <person name="Oyama M."/>
            <person name="Hata H."/>
            <person name="Watanabe M."/>
            <person name="Komatsu T."/>
            <person name="Mizushima-Sugano J."/>
            <person name="Satoh T."/>
            <person name="Shirai Y."/>
            <person name="Takahashi Y."/>
            <person name="Nakagawa K."/>
            <person name="Okumura K."/>
            <person name="Nagase T."/>
            <person name="Nomura N."/>
            <person name="Kikuchi H."/>
            <person name="Masuho Y."/>
            <person name="Yamashita R."/>
            <person name="Nakai K."/>
            <person name="Yada T."/>
            <person name="Nakamura Y."/>
            <person name="Ohara O."/>
            <person name="Isogai T."/>
            <person name="Sugano S."/>
        </authorList>
    </citation>
    <scope>NUCLEOTIDE SEQUENCE [LARGE SCALE MRNA] (ISOFORMS 1 AND 2)</scope>
    <source>
        <tissue>Hippocampus</tissue>
        <tissue>Testis</tissue>
    </source>
</reference>
<reference key="3">
    <citation type="journal article" date="2004" name="Nature">
        <title>DNA sequence and analysis of human chromosome 9.</title>
        <authorList>
            <person name="Humphray S.J."/>
            <person name="Oliver K."/>
            <person name="Hunt A.R."/>
            <person name="Plumb R.W."/>
            <person name="Loveland J.E."/>
            <person name="Howe K.L."/>
            <person name="Andrews T.D."/>
            <person name="Searle S."/>
            <person name="Hunt S.E."/>
            <person name="Scott C.E."/>
            <person name="Jones M.C."/>
            <person name="Ainscough R."/>
            <person name="Almeida J.P."/>
            <person name="Ambrose K.D."/>
            <person name="Ashwell R.I.S."/>
            <person name="Babbage A.K."/>
            <person name="Babbage S."/>
            <person name="Bagguley C.L."/>
            <person name="Bailey J."/>
            <person name="Banerjee R."/>
            <person name="Barker D.J."/>
            <person name="Barlow K.F."/>
            <person name="Bates K."/>
            <person name="Beasley H."/>
            <person name="Beasley O."/>
            <person name="Bird C.P."/>
            <person name="Bray-Allen S."/>
            <person name="Brown A.J."/>
            <person name="Brown J.Y."/>
            <person name="Burford D."/>
            <person name="Burrill W."/>
            <person name="Burton J."/>
            <person name="Carder C."/>
            <person name="Carter N.P."/>
            <person name="Chapman J.C."/>
            <person name="Chen Y."/>
            <person name="Clarke G."/>
            <person name="Clark S.Y."/>
            <person name="Clee C.M."/>
            <person name="Clegg S."/>
            <person name="Collier R.E."/>
            <person name="Corby N."/>
            <person name="Crosier M."/>
            <person name="Cummings A.T."/>
            <person name="Davies J."/>
            <person name="Dhami P."/>
            <person name="Dunn M."/>
            <person name="Dutta I."/>
            <person name="Dyer L.W."/>
            <person name="Earthrowl M.E."/>
            <person name="Faulkner L."/>
            <person name="Fleming C.J."/>
            <person name="Frankish A."/>
            <person name="Frankland J.A."/>
            <person name="French L."/>
            <person name="Fricker D.G."/>
            <person name="Garner P."/>
            <person name="Garnett J."/>
            <person name="Ghori J."/>
            <person name="Gilbert J.G.R."/>
            <person name="Glison C."/>
            <person name="Grafham D.V."/>
            <person name="Gribble S."/>
            <person name="Griffiths C."/>
            <person name="Griffiths-Jones S."/>
            <person name="Grocock R."/>
            <person name="Guy J."/>
            <person name="Hall R.E."/>
            <person name="Hammond S."/>
            <person name="Harley J.L."/>
            <person name="Harrison E.S.I."/>
            <person name="Hart E.A."/>
            <person name="Heath P.D."/>
            <person name="Henderson C.D."/>
            <person name="Hopkins B.L."/>
            <person name="Howard P.J."/>
            <person name="Howden P.J."/>
            <person name="Huckle E."/>
            <person name="Johnson C."/>
            <person name="Johnson D."/>
            <person name="Joy A.A."/>
            <person name="Kay M."/>
            <person name="Keenan S."/>
            <person name="Kershaw J.K."/>
            <person name="Kimberley A.M."/>
            <person name="King A."/>
            <person name="Knights A."/>
            <person name="Laird G.K."/>
            <person name="Langford C."/>
            <person name="Lawlor S."/>
            <person name="Leongamornlert D.A."/>
            <person name="Leversha M."/>
            <person name="Lloyd C."/>
            <person name="Lloyd D.M."/>
            <person name="Lovell J."/>
            <person name="Martin S."/>
            <person name="Mashreghi-Mohammadi M."/>
            <person name="Matthews L."/>
            <person name="McLaren S."/>
            <person name="McLay K.E."/>
            <person name="McMurray A."/>
            <person name="Milne S."/>
            <person name="Nickerson T."/>
            <person name="Nisbett J."/>
            <person name="Nordsiek G."/>
            <person name="Pearce A.V."/>
            <person name="Peck A.I."/>
            <person name="Porter K.M."/>
            <person name="Pandian R."/>
            <person name="Pelan S."/>
            <person name="Phillimore B."/>
            <person name="Povey S."/>
            <person name="Ramsey Y."/>
            <person name="Rand V."/>
            <person name="Scharfe M."/>
            <person name="Sehra H.K."/>
            <person name="Shownkeen R."/>
            <person name="Sims S.K."/>
            <person name="Skuce C.D."/>
            <person name="Smith M."/>
            <person name="Steward C.A."/>
            <person name="Swarbreck D."/>
            <person name="Sycamore N."/>
            <person name="Tester J."/>
            <person name="Thorpe A."/>
            <person name="Tracey A."/>
            <person name="Tromans A."/>
            <person name="Thomas D.W."/>
            <person name="Wall M."/>
            <person name="Wallis J.M."/>
            <person name="West A.P."/>
            <person name="Whitehead S.L."/>
            <person name="Willey D.L."/>
            <person name="Williams S.A."/>
            <person name="Wilming L."/>
            <person name="Wray P.W."/>
            <person name="Young L."/>
            <person name="Ashurst J.L."/>
            <person name="Coulson A."/>
            <person name="Blocker H."/>
            <person name="Durbin R.M."/>
            <person name="Sulston J.E."/>
            <person name="Hubbard T."/>
            <person name="Jackson M.J."/>
            <person name="Bentley D.R."/>
            <person name="Beck S."/>
            <person name="Rogers J."/>
            <person name="Dunham I."/>
        </authorList>
    </citation>
    <scope>NUCLEOTIDE SEQUENCE [LARGE SCALE GENOMIC DNA]</scope>
</reference>
<reference key="4">
    <citation type="submission" date="2005-07" db="EMBL/GenBank/DDBJ databases">
        <authorList>
            <person name="Mural R.J."/>
            <person name="Istrail S."/>
            <person name="Sutton G.G."/>
            <person name="Florea L."/>
            <person name="Halpern A.L."/>
            <person name="Mobarry C.M."/>
            <person name="Lippert R."/>
            <person name="Walenz B."/>
            <person name="Shatkay H."/>
            <person name="Dew I."/>
            <person name="Miller J.R."/>
            <person name="Flanigan M.J."/>
            <person name="Edwards N.J."/>
            <person name="Bolanos R."/>
            <person name="Fasulo D."/>
            <person name="Halldorsson B.V."/>
            <person name="Hannenhalli S."/>
            <person name="Turner R."/>
            <person name="Yooseph S."/>
            <person name="Lu F."/>
            <person name="Nusskern D.R."/>
            <person name="Shue B.C."/>
            <person name="Zheng X.H."/>
            <person name="Zhong F."/>
            <person name="Delcher A.L."/>
            <person name="Huson D.H."/>
            <person name="Kravitz S.A."/>
            <person name="Mouchard L."/>
            <person name="Reinert K."/>
            <person name="Remington K.A."/>
            <person name="Clark A.G."/>
            <person name="Waterman M.S."/>
            <person name="Eichler E.E."/>
            <person name="Adams M.D."/>
            <person name="Hunkapiller M.W."/>
            <person name="Myers E.W."/>
            <person name="Venter J.C."/>
        </authorList>
    </citation>
    <scope>NUCLEOTIDE SEQUENCE [LARGE SCALE GENOMIC DNA]</scope>
</reference>
<reference key="5">
    <citation type="journal article" date="2004" name="Genome Res.">
        <title>The status, quality, and expansion of the NIH full-length cDNA project: the Mammalian Gene Collection (MGC).</title>
        <authorList>
            <consortium name="The MGC Project Team"/>
        </authorList>
    </citation>
    <scope>NUCLEOTIDE SEQUENCE [LARGE SCALE MRNA] (ISOFORMS 1 AND 2)</scope>
    <source>
        <tissue>Blood vessel</tissue>
        <tissue>Uterus</tissue>
    </source>
</reference>
<reference key="6">
    <citation type="journal article" date="2007" name="BMC Genomics">
        <title>The full-ORF clone resource of the German cDNA consortium.</title>
        <authorList>
            <person name="Bechtel S."/>
            <person name="Rosenfelder H."/>
            <person name="Duda A."/>
            <person name="Schmidt C.P."/>
            <person name="Ernst U."/>
            <person name="Wellenreuther R."/>
            <person name="Mehrle A."/>
            <person name="Schuster C."/>
            <person name="Bahr A."/>
            <person name="Bloecker H."/>
            <person name="Heubner D."/>
            <person name="Hoerlein A."/>
            <person name="Michel G."/>
            <person name="Wedler H."/>
            <person name="Koehrer K."/>
            <person name="Ottenwaelder B."/>
            <person name="Poustka A."/>
            <person name="Wiemann S."/>
            <person name="Schupp I."/>
        </authorList>
    </citation>
    <scope>NUCLEOTIDE SEQUENCE [LARGE SCALE MRNA] OF 78-418 (ISOFORM 1)</scope>
    <source>
        <tissue>Stomach</tissue>
    </source>
</reference>
<reference key="7">
    <citation type="journal article" date="2009" name="J. Steroid Biochem. Mol. Biol.">
        <title>In search for function of two human orphan SDR enzymes: Hydroxysteroid dehydrogenase like 2 (HSDL2) and short-chain dehydrogenase/reductase-orphan (SDR-O).</title>
        <authorList>
            <person name="Kowalik D."/>
            <person name="Haller F."/>
            <person name="Adamski J."/>
            <person name="Moeller G."/>
        </authorList>
    </citation>
    <scope>FUNCTION</scope>
    <scope>SUBCELLULAR LOCATION</scope>
</reference>
<reference key="8">
    <citation type="journal article" date="2011" name="BMC Syst. Biol.">
        <title>Initial characterization of the human central proteome.</title>
        <authorList>
            <person name="Burkard T.R."/>
            <person name="Planyavsky M."/>
            <person name="Kaupe I."/>
            <person name="Breitwieser F.P."/>
            <person name="Buerckstuemmer T."/>
            <person name="Bennett K.L."/>
            <person name="Superti-Furga G."/>
            <person name="Colinge J."/>
        </authorList>
    </citation>
    <scope>IDENTIFICATION BY MASS SPECTROMETRY [LARGE SCALE ANALYSIS]</scope>
</reference>
<reference key="9">
    <citation type="journal article" date="2014" name="J. Proteomics">
        <title>An enzyme assisted RP-RPLC approach for in-depth analysis of human liver phosphoproteome.</title>
        <authorList>
            <person name="Bian Y."/>
            <person name="Song C."/>
            <person name="Cheng K."/>
            <person name="Dong M."/>
            <person name="Wang F."/>
            <person name="Huang J."/>
            <person name="Sun D."/>
            <person name="Wang L."/>
            <person name="Ye M."/>
            <person name="Zou H."/>
        </authorList>
    </citation>
    <scope>IDENTIFICATION BY MASS SPECTROMETRY [LARGE SCALE ANALYSIS]</scope>
    <source>
        <tissue>Liver</tissue>
    </source>
</reference>
<reference key="10">
    <citation type="journal article" date="2015" name="Proteomics">
        <title>N-terminome analysis of the human mitochondrial proteome.</title>
        <authorList>
            <person name="Vaca Jacome A.S."/>
            <person name="Rabilloud T."/>
            <person name="Schaeffer-Reiss C."/>
            <person name="Rompais M."/>
            <person name="Ayoub D."/>
            <person name="Lane L."/>
            <person name="Bairoch A."/>
            <person name="Van Dorsselaer A."/>
            <person name="Carapito C."/>
        </authorList>
    </citation>
    <scope>IDENTIFICATION BY MASS SPECTROMETRY [LARGE SCALE ANALYSIS]</scope>
</reference>
<reference key="11">
    <citation type="journal article" date="2018" name="Cell Res.">
        <title>Landscape of the regulatory elements for lysine 2-hydroxyisobutyrylation pathway.</title>
        <authorList>
            <person name="Huang H."/>
            <person name="Luo Z."/>
            <person name="Qi S."/>
            <person name="Huang J."/>
            <person name="Xu P."/>
            <person name="Wang X."/>
            <person name="Gao L."/>
            <person name="Li F."/>
            <person name="Wang J."/>
            <person name="Zhao W."/>
            <person name="Gu W."/>
            <person name="Chen Z."/>
            <person name="Dai L."/>
            <person name="Dai J."/>
            <person name="Zhao Y."/>
        </authorList>
    </citation>
    <scope>HYDROXYBUTYRYLATION AT LYS-42</scope>
</reference>
<reference key="12">
    <citation type="submission" date="2010-03" db="PDB data bank">
        <title>Crystal structure of the catalytic domain of human hydroxysteroid dehydrogenase like 2 (HSDL2).</title>
        <authorList>
            <consortium name="Structural genomics consortium (SGC)"/>
        </authorList>
    </citation>
    <scope>X-RAY CRYSTALLOGRAPHY (2.25 ANGSTROMS) OF 1-293 IN COMPLEX WITH NADP</scope>
</reference>
<reference key="13">
    <citation type="journal article" date="2024" name="Sci. Adv.">
        <title>HSDL2 links nutritional cues to bile acid and cholesterol homeostasis.</title>
        <authorList>
            <person name="Samson N."/>
            <person name="Bosoi C.R."/>
            <person name="Roy C."/>
            <person name="Turcotte L."/>
            <person name="Tribouillard L."/>
            <person name="Mouchiroud M."/>
            <person name="Berthiaume L."/>
            <person name="Trottier J."/>
            <person name="Silva H.C.G."/>
            <person name="Guerbette T."/>
            <person name="Plata-Gomez A.B."/>
            <person name="Besse-Patin A."/>
            <person name="Montoni A."/>
            <person name="Ilacqua N."/>
            <person name="Lamothe J."/>
            <person name="Citron Y.R."/>
            <person name="Gelinas Y."/>
            <person name="Gobeil S."/>
            <person name="Zoncu R."/>
            <person name="Caron A."/>
            <person name="Morissette M."/>
            <person name="Pellegrini L."/>
            <person name="Rochette P.J."/>
            <person name="Estall J.L."/>
            <person name="Efeyan A."/>
            <person name="Shum M."/>
            <person name="Audet-Walsh E."/>
            <person name="Barbier O."/>
            <person name="Marette A."/>
            <person name="Laplante M."/>
        </authorList>
    </citation>
    <scope>SUBCELLULAR LOCATION</scope>
    <scope>FUNCTION</scope>
</reference>
<accession>Q6YN16</accession>
<accession>A8K1L4</accession>
<accession>A8K8X1</accession>
<accession>A8MSV3</accession>
<accession>Q658M8</accession>
<accession>Q9BT58</accession>
<sequence>MLPNTGRLAGCTVFITGASRGIGKAIALKAAKDGANIVIAAKTAQPHPKLLGTIYTAAEEIEAVGGKALPCIVDVRDEQQISAAVEKAIKKFGGIDILVNNASAISLTNTLDTPTKRLDLMMNVNTRGTYLASKACIPYLKKSKVAHILNISPPLNLNPVWFKQHCAYTIAKYGMSMYVLGMAEEFKGEIAVNALWPKTAIHTAAMDMLGGPGIESQCRKVDIIADAAYSIFQKPKSFTGNFVIDENILKEEGIENFDVYAIKPGHPLQPDFFLDEYPEAVSKKVESTGAVPEFKEEKLQLQPKPRSGAVEETFRIVKDSLSDDVVKATQAIYLFELSGEDGGTWFLDLKSKGGNVGYGEPSDQADVVMSMTTDDFVKMFSGKLKPTMAFMSGKLKIKGNMALAIKLEKLMNQMNARL</sequence>
<feature type="chain" id="PRO_0000319888" description="Hydroxysteroid dehydrogenase-like protein 2">
    <location>
        <begin position="1"/>
        <end position="418"/>
    </location>
</feature>
<feature type="domain" description="SCP2">
    <location>
        <begin position="306"/>
        <end position="415"/>
    </location>
</feature>
<feature type="active site" description="Proton acceptor" evidence="2">
    <location>
        <position position="168"/>
    </location>
</feature>
<feature type="binding site" evidence="7">
    <location>
        <begin position="17"/>
        <end position="23"/>
    </location>
    <ligand>
        <name>NADP(+)</name>
        <dbReference type="ChEBI" id="CHEBI:58349"/>
    </ligand>
</feature>
<feature type="binding site" evidence="7">
    <location>
        <position position="42"/>
    </location>
    <ligand>
        <name>NADP(+)</name>
        <dbReference type="ChEBI" id="CHEBI:58349"/>
    </ligand>
</feature>
<feature type="binding site" evidence="7">
    <location>
        <position position="74"/>
    </location>
    <ligand>
        <name>NADP(+)</name>
        <dbReference type="ChEBI" id="CHEBI:58349"/>
    </ligand>
</feature>
<feature type="binding site" evidence="7">
    <location>
        <position position="172"/>
    </location>
    <ligand>
        <name>NADP(+)</name>
        <dbReference type="ChEBI" id="CHEBI:58349"/>
    </ligand>
</feature>
<feature type="modified residue" description="N6-(2-hydroxyisobutyryl)lysine" evidence="5">
    <location>
        <position position="42"/>
    </location>
</feature>
<feature type="modified residue" description="N6-acetyllysine" evidence="1">
    <location>
        <position position="116"/>
    </location>
</feature>
<feature type="modified residue" description="N6-succinyllysine" evidence="1">
    <location>
        <position position="318"/>
    </location>
</feature>
<feature type="splice variant" id="VSP_031529" description="In isoform 2." evidence="8 9">
    <location>
        <begin position="94"/>
        <end position="166"/>
    </location>
</feature>
<feature type="sequence conflict" description="In Ref. 2; BAF82618." evidence="10" ref="2">
    <original>E</original>
    <variation>G</variation>
    <location>
        <position position="62"/>
    </location>
</feature>
<feature type="sequence conflict" description="In Ref. 2; BAF85175." evidence="10" ref="2">
    <original>I</original>
    <variation>V</variation>
    <location>
        <position position="89"/>
    </location>
</feature>
<feature type="turn" evidence="12">
    <location>
        <begin position="7"/>
        <end position="10"/>
    </location>
</feature>
<feature type="strand" evidence="12">
    <location>
        <begin position="12"/>
        <end position="16"/>
    </location>
</feature>
<feature type="turn" evidence="12">
    <location>
        <begin position="17"/>
        <end position="19"/>
    </location>
</feature>
<feature type="helix" evidence="12">
    <location>
        <begin position="21"/>
        <end position="31"/>
    </location>
</feature>
<feature type="turn" evidence="12">
    <location>
        <begin position="32"/>
        <end position="34"/>
    </location>
</feature>
<feature type="strand" evidence="12">
    <location>
        <begin position="36"/>
        <end position="42"/>
    </location>
</feature>
<feature type="strand" evidence="12">
    <location>
        <begin position="48"/>
        <end position="50"/>
    </location>
</feature>
<feature type="helix" evidence="12">
    <location>
        <begin position="54"/>
        <end position="63"/>
    </location>
</feature>
<feature type="strand" evidence="12">
    <location>
        <begin position="67"/>
        <end position="72"/>
    </location>
</feature>
<feature type="helix" evidence="12">
    <location>
        <begin position="78"/>
        <end position="92"/>
    </location>
</feature>
<feature type="strand" evidence="12">
    <location>
        <begin position="97"/>
        <end position="100"/>
    </location>
</feature>
<feature type="turn" evidence="12">
    <location>
        <begin position="110"/>
        <end position="112"/>
    </location>
</feature>
<feature type="helix" evidence="12">
    <location>
        <begin position="115"/>
        <end position="124"/>
    </location>
</feature>
<feature type="helix" evidence="12">
    <location>
        <begin position="126"/>
        <end position="140"/>
    </location>
</feature>
<feature type="strand" evidence="12">
    <location>
        <begin position="147"/>
        <end position="151"/>
    </location>
</feature>
<feature type="helix" evidence="12">
    <location>
        <begin position="159"/>
        <end position="161"/>
    </location>
</feature>
<feature type="strand" evidence="12">
    <location>
        <begin position="163"/>
        <end position="165"/>
    </location>
</feature>
<feature type="helix" evidence="12">
    <location>
        <begin position="166"/>
        <end position="185"/>
    </location>
</feature>
<feature type="turn" evidence="12">
    <location>
        <begin position="186"/>
        <end position="189"/>
    </location>
</feature>
<feature type="strand" evidence="12">
    <location>
        <begin position="191"/>
        <end position="196"/>
    </location>
</feature>
<feature type="helix" evidence="12">
    <location>
        <begin position="204"/>
        <end position="209"/>
    </location>
</feature>
<feature type="helix" evidence="12">
    <location>
        <begin position="215"/>
        <end position="217"/>
    </location>
</feature>
<feature type="helix" evidence="12">
    <location>
        <begin position="222"/>
        <end position="232"/>
    </location>
</feature>
<feature type="strand" evidence="12">
    <location>
        <begin position="242"/>
        <end position="244"/>
    </location>
</feature>
<feature type="helix" evidence="12">
    <location>
        <begin position="245"/>
        <end position="251"/>
    </location>
</feature>
<feature type="helix" evidence="12">
    <location>
        <begin position="257"/>
        <end position="260"/>
    </location>
</feature>
<feature type="strand" evidence="12">
    <location>
        <begin position="261"/>
        <end position="263"/>
    </location>
</feature>
<keyword id="KW-0002">3D-structure</keyword>
<keyword id="KW-0007">Acetylation</keyword>
<keyword id="KW-0025">Alternative splicing</keyword>
<keyword id="KW-0379">Hydroxylation</keyword>
<keyword id="KW-0496">Mitochondrion</keyword>
<keyword id="KW-0521">NADP</keyword>
<keyword id="KW-0560">Oxidoreductase</keyword>
<keyword id="KW-0576">Peroxisome</keyword>
<keyword id="KW-1267">Proteomics identification</keyword>
<keyword id="KW-1185">Reference proteome</keyword>
<evidence type="ECO:0000250" key="1">
    <source>
        <dbReference type="UniProtKB" id="Q2TPA8"/>
    </source>
</evidence>
<evidence type="ECO:0000255" key="2">
    <source>
        <dbReference type="PROSITE-ProRule" id="PRU10001"/>
    </source>
</evidence>
<evidence type="ECO:0000269" key="3">
    <source>
    </source>
</evidence>
<evidence type="ECO:0000269" key="4">
    <source>
    </source>
</evidence>
<evidence type="ECO:0000269" key="5">
    <source>
    </source>
</evidence>
<evidence type="ECO:0000269" key="6">
    <source>
    </source>
</evidence>
<evidence type="ECO:0000269" key="7">
    <source ref="12"/>
</evidence>
<evidence type="ECO:0000303" key="8">
    <source>
    </source>
</evidence>
<evidence type="ECO:0000303" key="9">
    <source>
    </source>
</evidence>
<evidence type="ECO:0000305" key="10"/>
<evidence type="ECO:0000312" key="11">
    <source>
        <dbReference type="HGNC" id="HGNC:18572"/>
    </source>
</evidence>
<evidence type="ECO:0007829" key="12">
    <source>
        <dbReference type="PDB" id="3KVO"/>
    </source>
</evidence>
<name>HSDL2_HUMAN</name>
<protein>
    <recommendedName>
        <fullName>Hydroxysteroid dehydrogenase-like protein 2</fullName>
        <ecNumber>1.-.-.-</ecNumber>
    </recommendedName>
    <alternativeName>
        <fullName>Short chain dehydrogenase/reductase family 13C member 1</fullName>
    </alternativeName>
</protein>
<proteinExistence type="evidence at protein level"/>
<comment type="function">
    <text evidence="4 6">Has apparently no steroid dehydrogenase activity (PubMed:19703561). Controls bile acid (BA) and lipid metabolism in response to nutritional cues (PubMed:38820148).</text>
</comment>
<comment type="subcellular location">
    <subcellularLocation>
        <location evidence="4">Peroxisome</location>
    </subcellularLocation>
    <subcellularLocation>
        <location evidence="6">Mitochondrion</location>
    </subcellularLocation>
</comment>
<comment type="alternative products">
    <event type="alternative splicing"/>
    <isoform>
        <id>Q6YN16-1</id>
        <name>1</name>
        <sequence type="displayed"/>
    </isoform>
    <isoform>
        <id>Q6YN16-2</id>
        <name>2</name>
        <sequence type="described" ref="VSP_031529"/>
    </isoform>
</comment>
<comment type="tissue specificity">
    <text evidence="3">Ubiquitous.</text>
</comment>
<comment type="similarity">
    <text evidence="10">Belongs to the short-chain dehydrogenases/reductases (SDR) family.</text>
</comment>
<dbReference type="EC" id="1.-.-.-"/>
<dbReference type="EMBL" id="AY093428">
    <property type="protein sequence ID" value="AAM14670.1"/>
    <property type="molecule type" value="mRNA"/>
</dbReference>
<dbReference type="EMBL" id="AK292486">
    <property type="protein sequence ID" value="BAF85175.1"/>
    <property type="molecule type" value="mRNA"/>
</dbReference>
<dbReference type="EMBL" id="AK289929">
    <property type="protein sequence ID" value="BAF82618.1"/>
    <property type="molecule type" value="mRNA"/>
</dbReference>
<dbReference type="EMBL" id="AL162732">
    <property type="status" value="NOT_ANNOTATED_CDS"/>
    <property type="molecule type" value="Genomic_DNA"/>
</dbReference>
<dbReference type="EMBL" id="CH471105">
    <property type="protein sequence ID" value="EAW59105.1"/>
    <property type="molecule type" value="Genomic_DNA"/>
</dbReference>
<dbReference type="EMBL" id="CH471105">
    <property type="protein sequence ID" value="EAW59106.1"/>
    <property type="molecule type" value="Genomic_DNA"/>
</dbReference>
<dbReference type="EMBL" id="BC004331">
    <property type="protein sequence ID" value="AAH04331.1"/>
    <property type="molecule type" value="mRNA"/>
</dbReference>
<dbReference type="EMBL" id="BC095451">
    <property type="protein sequence ID" value="AAH95451.1"/>
    <property type="molecule type" value="mRNA"/>
</dbReference>
<dbReference type="EMBL" id="AL833735">
    <property type="protein sequence ID" value="CAH56256.1"/>
    <property type="molecule type" value="mRNA"/>
</dbReference>
<dbReference type="CCDS" id="CCDS43864.1">
    <molecule id="Q6YN16-1"/>
</dbReference>
<dbReference type="CCDS" id="CCDS56582.1">
    <molecule id="Q6YN16-2"/>
</dbReference>
<dbReference type="RefSeq" id="NP_001182751.1">
    <molecule id="Q6YN16-2"/>
    <property type="nucleotide sequence ID" value="NM_001195822.2"/>
</dbReference>
<dbReference type="RefSeq" id="NP_115679.2">
    <molecule id="Q6YN16-1"/>
    <property type="nucleotide sequence ID" value="NM_032303.4"/>
</dbReference>
<dbReference type="PDB" id="3KVO">
    <property type="method" value="X-ray"/>
    <property type="resolution" value="2.25 A"/>
    <property type="chains" value="A/B=1-293"/>
</dbReference>
<dbReference type="PDBsum" id="3KVO"/>
<dbReference type="SMR" id="Q6YN16"/>
<dbReference type="BioGRID" id="123990">
    <property type="interactions" value="135"/>
</dbReference>
<dbReference type="FunCoup" id="Q6YN16">
    <property type="interactions" value="1310"/>
</dbReference>
<dbReference type="IntAct" id="Q6YN16">
    <property type="interactions" value="54"/>
</dbReference>
<dbReference type="MINT" id="Q6YN16"/>
<dbReference type="STRING" id="9606.ENSP00000381785"/>
<dbReference type="GlyGen" id="Q6YN16">
    <property type="glycosylation" value="1 site, 1 O-linked glycan (1 site)"/>
</dbReference>
<dbReference type="iPTMnet" id="Q6YN16"/>
<dbReference type="PhosphoSitePlus" id="Q6YN16"/>
<dbReference type="SwissPalm" id="Q6YN16"/>
<dbReference type="BioMuta" id="HSDL2"/>
<dbReference type="DMDM" id="74749521"/>
<dbReference type="jPOST" id="Q6YN16"/>
<dbReference type="MassIVE" id="Q6YN16"/>
<dbReference type="PaxDb" id="9606-ENSP00000381785"/>
<dbReference type="PeptideAtlas" id="Q6YN16"/>
<dbReference type="ProteomicsDB" id="67855">
    <molecule id="Q6YN16-1"/>
</dbReference>
<dbReference type="ProteomicsDB" id="67856">
    <molecule id="Q6YN16-2"/>
</dbReference>
<dbReference type="Pumba" id="Q6YN16"/>
<dbReference type="Antibodypedia" id="29681">
    <property type="antibodies" value="149 antibodies from 23 providers"/>
</dbReference>
<dbReference type="DNASU" id="84263"/>
<dbReference type="Ensembl" id="ENST00000398803.1">
    <molecule id="Q6YN16-2"/>
    <property type="protein sequence ID" value="ENSP00000381783.1"/>
    <property type="gene ID" value="ENSG00000119471.15"/>
</dbReference>
<dbReference type="Ensembl" id="ENST00000398805.8">
    <molecule id="Q6YN16-1"/>
    <property type="protein sequence ID" value="ENSP00000381785.3"/>
    <property type="gene ID" value="ENSG00000119471.15"/>
</dbReference>
<dbReference type="GeneID" id="84263"/>
<dbReference type="KEGG" id="hsa:84263"/>
<dbReference type="MANE-Select" id="ENST00000398805.8">
    <property type="protein sequence ID" value="ENSP00000381785.3"/>
    <property type="RefSeq nucleotide sequence ID" value="NM_032303.5"/>
    <property type="RefSeq protein sequence ID" value="NP_115679.2"/>
</dbReference>
<dbReference type="UCSC" id="uc004bga.3">
    <molecule id="Q6YN16-1"/>
    <property type="organism name" value="human"/>
</dbReference>
<dbReference type="AGR" id="HGNC:18572"/>
<dbReference type="CTD" id="84263"/>
<dbReference type="DisGeNET" id="84263"/>
<dbReference type="GeneCards" id="HSDL2"/>
<dbReference type="HGNC" id="HGNC:18572">
    <property type="gene designation" value="HSDL2"/>
</dbReference>
<dbReference type="HPA" id="ENSG00000119471">
    <property type="expression patterns" value="Tissue enhanced (tongue)"/>
</dbReference>
<dbReference type="neXtProt" id="NX_Q6YN16"/>
<dbReference type="OpenTargets" id="ENSG00000119471"/>
<dbReference type="PharmGKB" id="PA134980105"/>
<dbReference type="VEuPathDB" id="HostDB:ENSG00000119471"/>
<dbReference type="eggNOG" id="KOG0725">
    <property type="taxonomic scope" value="Eukaryota"/>
</dbReference>
<dbReference type="eggNOG" id="KOG4170">
    <property type="taxonomic scope" value="Eukaryota"/>
</dbReference>
<dbReference type="GeneTree" id="ENSGT00940000156729"/>
<dbReference type="HOGENOM" id="CLU_010194_25_0_1"/>
<dbReference type="InParanoid" id="Q6YN16"/>
<dbReference type="OMA" id="WWSSVAN"/>
<dbReference type="OrthoDB" id="5327538at2759"/>
<dbReference type="PAN-GO" id="Q6YN16">
    <property type="GO annotations" value="1 GO annotation based on evolutionary models"/>
</dbReference>
<dbReference type="PhylomeDB" id="Q6YN16"/>
<dbReference type="TreeFam" id="TF101523"/>
<dbReference type="PathwayCommons" id="Q6YN16"/>
<dbReference type="SignaLink" id="Q6YN16"/>
<dbReference type="BioGRID-ORCS" id="84263">
    <property type="hits" value="12 hits in 1161 CRISPR screens"/>
</dbReference>
<dbReference type="CD-CODE" id="FB4E32DD">
    <property type="entry name" value="Presynaptic clusters and postsynaptic densities"/>
</dbReference>
<dbReference type="ChiTaRS" id="HSDL2">
    <property type="organism name" value="human"/>
</dbReference>
<dbReference type="EvolutionaryTrace" id="Q6YN16"/>
<dbReference type="GenomeRNAi" id="84263"/>
<dbReference type="Pharos" id="Q6YN16">
    <property type="development level" value="Tbio"/>
</dbReference>
<dbReference type="PRO" id="PR:Q6YN16"/>
<dbReference type="Proteomes" id="UP000005640">
    <property type="component" value="Chromosome 9"/>
</dbReference>
<dbReference type="RNAct" id="Q6YN16">
    <property type="molecule type" value="protein"/>
</dbReference>
<dbReference type="Bgee" id="ENSG00000119471">
    <property type="expression patterns" value="Expressed in heart right ventricle and 200 other cell types or tissues"/>
</dbReference>
<dbReference type="ExpressionAtlas" id="Q6YN16">
    <property type="expression patterns" value="baseline and differential"/>
</dbReference>
<dbReference type="GO" id="GO:0016020">
    <property type="term" value="C:membrane"/>
    <property type="evidence" value="ECO:0007005"/>
    <property type="project" value="UniProtKB"/>
</dbReference>
<dbReference type="GO" id="GO:0005739">
    <property type="term" value="C:mitochondrion"/>
    <property type="evidence" value="ECO:0000314"/>
    <property type="project" value="HPA"/>
</dbReference>
<dbReference type="GO" id="GO:0005777">
    <property type="term" value="C:peroxisome"/>
    <property type="evidence" value="ECO:0000314"/>
    <property type="project" value="UniProtKB"/>
</dbReference>
<dbReference type="GO" id="GO:0016491">
    <property type="term" value="F:oxidoreductase activity"/>
    <property type="evidence" value="ECO:0007669"/>
    <property type="project" value="UniProtKB-KW"/>
</dbReference>
<dbReference type="GO" id="GO:0042632">
    <property type="term" value="P:cholesterol homeostasis"/>
    <property type="evidence" value="ECO:0000315"/>
    <property type="project" value="UniProtKB"/>
</dbReference>
<dbReference type="CDD" id="cd09762">
    <property type="entry name" value="HSDL2_SDR_c"/>
    <property type="match status" value="1"/>
</dbReference>
<dbReference type="FunFam" id="3.40.50.720:FF:000301">
    <property type="entry name" value="Hydroxysteroid dehydrogenase like 2"/>
    <property type="match status" value="1"/>
</dbReference>
<dbReference type="FunFam" id="3.30.1050.10:FF:000005">
    <property type="entry name" value="hydroxysteroid dehydrogenase-like protein 2 isoform X1"/>
    <property type="match status" value="1"/>
</dbReference>
<dbReference type="Gene3D" id="3.40.50.720">
    <property type="entry name" value="NAD(P)-binding Rossmann-like Domain"/>
    <property type="match status" value="1"/>
</dbReference>
<dbReference type="Gene3D" id="3.30.1050.10">
    <property type="entry name" value="SCP2 sterol-binding domain"/>
    <property type="match status" value="1"/>
</dbReference>
<dbReference type="InterPro" id="IPR051935">
    <property type="entry name" value="HSDL2"/>
</dbReference>
<dbReference type="InterPro" id="IPR036291">
    <property type="entry name" value="NAD(P)-bd_dom_sf"/>
</dbReference>
<dbReference type="InterPro" id="IPR020904">
    <property type="entry name" value="Sc_DH/Rdtase_CS"/>
</dbReference>
<dbReference type="InterPro" id="IPR003033">
    <property type="entry name" value="SCP2_sterol-bd_dom"/>
</dbReference>
<dbReference type="InterPro" id="IPR036527">
    <property type="entry name" value="SCP2_sterol-bd_dom_sf"/>
</dbReference>
<dbReference type="InterPro" id="IPR002347">
    <property type="entry name" value="SDR_fam"/>
</dbReference>
<dbReference type="NCBIfam" id="NF006133">
    <property type="entry name" value="PRK08278.1"/>
    <property type="match status" value="1"/>
</dbReference>
<dbReference type="PANTHER" id="PTHR42808">
    <property type="entry name" value="HYDROXYSTEROID DEHYDROGENASE-LIKE PROTEIN 2"/>
    <property type="match status" value="1"/>
</dbReference>
<dbReference type="PANTHER" id="PTHR42808:SF3">
    <property type="entry name" value="HYDROXYSTEROID DEHYDROGENASE-LIKE PROTEIN 2"/>
    <property type="match status" value="1"/>
</dbReference>
<dbReference type="Pfam" id="PF00106">
    <property type="entry name" value="adh_short"/>
    <property type="match status" value="1"/>
</dbReference>
<dbReference type="Pfam" id="PF02036">
    <property type="entry name" value="SCP2"/>
    <property type="match status" value="1"/>
</dbReference>
<dbReference type="PRINTS" id="PR00081">
    <property type="entry name" value="GDHRDH"/>
</dbReference>
<dbReference type="SUPFAM" id="SSF51735">
    <property type="entry name" value="NAD(P)-binding Rossmann-fold domains"/>
    <property type="match status" value="1"/>
</dbReference>
<dbReference type="SUPFAM" id="SSF55718">
    <property type="entry name" value="SCP-like"/>
    <property type="match status" value="1"/>
</dbReference>
<dbReference type="PROSITE" id="PS00061">
    <property type="entry name" value="ADH_SHORT"/>
    <property type="match status" value="1"/>
</dbReference>